<reference key="1">
    <citation type="journal article" date="2004" name="Nat. Biotechnol.">
        <title>The genome sequence of the anaerobic, sulfate-reducing bacterium Desulfovibrio vulgaris Hildenborough.</title>
        <authorList>
            <person name="Heidelberg J.F."/>
            <person name="Seshadri R."/>
            <person name="Haveman S.A."/>
            <person name="Hemme C.L."/>
            <person name="Paulsen I.T."/>
            <person name="Kolonay J.F."/>
            <person name="Eisen J.A."/>
            <person name="Ward N.L."/>
            <person name="Methe B.A."/>
            <person name="Brinkac L.M."/>
            <person name="Daugherty S.C."/>
            <person name="DeBoy R.T."/>
            <person name="Dodson R.J."/>
            <person name="Durkin A.S."/>
            <person name="Madupu R."/>
            <person name="Nelson W.C."/>
            <person name="Sullivan S.A."/>
            <person name="Fouts D.E."/>
            <person name="Haft D.H."/>
            <person name="Selengut J."/>
            <person name="Peterson J.D."/>
            <person name="Davidsen T.M."/>
            <person name="Zafar N."/>
            <person name="Zhou L."/>
            <person name="Radune D."/>
            <person name="Dimitrov G."/>
            <person name="Hance M."/>
            <person name="Tran K."/>
            <person name="Khouri H.M."/>
            <person name="Gill J."/>
            <person name="Utterback T.R."/>
            <person name="Feldblyum T.V."/>
            <person name="Wall J.D."/>
            <person name="Voordouw G."/>
            <person name="Fraser C.M."/>
        </authorList>
    </citation>
    <scope>NUCLEOTIDE SEQUENCE [LARGE SCALE GENOMIC DNA]</scope>
    <source>
        <strain>ATCC 29579 / DSM 644 / CCUG 34227 / NCIMB 8303 / VKM B-1760 / Hildenborough</strain>
    </source>
</reference>
<evidence type="ECO:0000255" key="1">
    <source>
        <dbReference type="HAMAP-Rule" id="MF_00159"/>
    </source>
</evidence>
<organism>
    <name type="scientific">Nitratidesulfovibrio vulgaris (strain ATCC 29579 / DSM 644 / CCUG 34227 / NCIMB 8303 / VKM B-1760 / Hildenborough)</name>
    <name type="common">Desulfovibrio vulgaris</name>
    <dbReference type="NCBI Taxonomy" id="882"/>
    <lineage>
        <taxon>Bacteria</taxon>
        <taxon>Pseudomonadati</taxon>
        <taxon>Thermodesulfobacteriota</taxon>
        <taxon>Desulfovibrionia</taxon>
        <taxon>Desulfovibrionales</taxon>
        <taxon>Desulfovibrionaceae</taxon>
        <taxon>Nitratidesulfovibrio</taxon>
    </lineage>
</organism>
<name>ISPG_NITV2</name>
<gene>
    <name evidence="1" type="primary">ispG</name>
    <name type="ordered locus">DVU_1344</name>
</gene>
<keyword id="KW-0004">4Fe-4S</keyword>
<keyword id="KW-0408">Iron</keyword>
<keyword id="KW-0411">Iron-sulfur</keyword>
<keyword id="KW-0414">Isoprene biosynthesis</keyword>
<keyword id="KW-0479">Metal-binding</keyword>
<keyword id="KW-0560">Oxidoreductase</keyword>
<keyword id="KW-1185">Reference proteome</keyword>
<comment type="function">
    <text evidence="1">Converts 2C-methyl-D-erythritol 2,4-cyclodiphosphate (ME-2,4cPP) into 1-hydroxy-2-methyl-2-(E)-butenyl 4-diphosphate.</text>
</comment>
<comment type="catalytic activity">
    <reaction evidence="1">
        <text>(2E)-4-hydroxy-3-methylbut-2-enyl diphosphate + oxidized [flavodoxin] + H2O + 2 H(+) = 2-C-methyl-D-erythritol 2,4-cyclic diphosphate + reduced [flavodoxin]</text>
        <dbReference type="Rhea" id="RHEA:43604"/>
        <dbReference type="Rhea" id="RHEA-COMP:10622"/>
        <dbReference type="Rhea" id="RHEA-COMP:10623"/>
        <dbReference type="ChEBI" id="CHEBI:15377"/>
        <dbReference type="ChEBI" id="CHEBI:15378"/>
        <dbReference type="ChEBI" id="CHEBI:57618"/>
        <dbReference type="ChEBI" id="CHEBI:58210"/>
        <dbReference type="ChEBI" id="CHEBI:58483"/>
        <dbReference type="ChEBI" id="CHEBI:128753"/>
        <dbReference type="EC" id="1.17.7.3"/>
    </reaction>
</comment>
<comment type="cofactor">
    <cofactor evidence="1">
        <name>[4Fe-4S] cluster</name>
        <dbReference type="ChEBI" id="CHEBI:49883"/>
    </cofactor>
    <text evidence="1">Binds 1 [4Fe-4S] cluster.</text>
</comment>
<comment type="pathway">
    <text evidence="1">Isoprenoid biosynthesis; isopentenyl diphosphate biosynthesis via DXP pathway; isopentenyl diphosphate from 1-deoxy-D-xylulose 5-phosphate: step 5/6.</text>
</comment>
<comment type="similarity">
    <text evidence="1">Belongs to the IspG family.</text>
</comment>
<proteinExistence type="inferred from homology"/>
<accession>Q72CD9</accession>
<dbReference type="EC" id="1.17.7.3" evidence="1"/>
<dbReference type="EMBL" id="AE017285">
    <property type="protein sequence ID" value="AAS95822.1"/>
    <property type="molecule type" value="Genomic_DNA"/>
</dbReference>
<dbReference type="RefSeq" id="YP_010563.1">
    <property type="nucleotide sequence ID" value="NC_002937.3"/>
</dbReference>
<dbReference type="SMR" id="Q72CD9"/>
<dbReference type="IntAct" id="Q72CD9">
    <property type="interactions" value="1"/>
</dbReference>
<dbReference type="STRING" id="882.DVU_1344"/>
<dbReference type="PaxDb" id="882-DVU_1344"/>
<dbReference type="DNASU" id="2795143"/>
<dbReference type="EnsemblBacteria" id="AAS95822">
    <property type="protein sequence ID" value="AAS95822"/>
    <property type="gene ID" value="DVU_1344"/>
</dbReference>
<dbReference type="KEGG" id="dvu:DVU_1344"/>
<dbReference type="PATRIC" id="fig|882.5.peg.1256"/>
<dbReference type="eggNOG" id="COG0821">
    <property type="taxonomic scope" value="Bacteria"/>
</dbReference>
<dbReference type="HOGENOM" id="CLU_042258_0_0_7"/>
<dbReference type="OrthoDB" id="9803214at2"/>
<dbReference type="PhylomeDB" id="Q72CD9"/>
<dbReference type="UniPathway" id="UPA00056">
    <property type="reaction ID" value="UER00096"/>
</dbReference>
<dbReference type="Proteomes" id="UP000002194">
    <property type="component" value="Chromosome"/>
</dbReference>
<dbReference type="GO" id="GO:0051539">
    <property type="term" value="F:4 iron, 4 sulfur cluster binding"/>
    <property type="evidence" value="ECO:0007669"/>
    <property type="project" value="UniProtKB-UniRule"/>
</dbReference>
<dbReference type="GO" id="GO:0046429">
    <property type="term" value="F:4-hydroxy-3-methylbut-2-en-1-yl diphosphate synthase activity (ferredoxin)"/>
    <property type="evidence" value="ECO:0007669"/>
    <property type="project" value="UniProtKB-UniRule"/>
</dbReference>
<dbReference type="GO" id="GO:0141197">
    <property type="term" value="F:4-hydroxy-3-methylbut-2-enyl-diphosphate synthase activity (flavodoxin)"/>
    <property type="evidence" value="ECO:0007669"/>
    <property type="project" value="UniProtKB-EC"/>
</dbReference>
<dbReference type="GO" id="GO:0005506">
    <property type="term" value="F:iron ion binding"/>
    <property type="evidence" value="ECO:0007669"/>
    <property type="project" value="InterPro"/>
</dbReference>
<dbReference type="GO" id="GO:0019288">
    <property type="term" value="P:isopentenyl diphosphate biosynthetic process, methylerythritol 4-phosphate pathway"/>
    <property type="evidence" value="ECO:0007669"/>
    <property type="project" value="UniProtKB-UniRule"/>
</dbReference>
<dbReference type="GO" id="GO:0016114">
    <property type="term" value="P:terpenoid biosynthetic process"/>
    <property type="evidence" value="ECO:0007669"/>
    <property type="project" value="InterPro"/>
</dbReference>
<dbReference type="FunFam" id="3.20.20.20:FF:000001">
    <property type="entry name" value="4-hydroxy-3-methylbut-2-en-1-yl diphosphate synthase (flavodoxin)"/>
    <property type="match status" value="1"/>
</dbReference>
<dbReference type="Gene3D" id="3.20.20.20">
    <property type="entry name" value="Dihydropteroate synthase-like"/>
    <property type="match status" value="1"/>
</dbReference>
<dbReference type="Gene3D" id="3.30.413.10">
    <property type="entry name" value="Sulfite Reductase Hemoprotein, domain 1"/>
    <property type="match status" value="1"/>
</dbReference>
<dbReference type="HAMAP" id="MF_00159">
    <property type="entry name" value="IspG"/>
    <property type="match status" value="1"/>
</dbReference>
<dbReference type="InterPro" id="IPR011005">
    <property type="entry name" value="Dihydropteroate_synth-like_sf"/>
</dbReference>
<dbReference type="InterPro" id="IPR016425">
    <property type="entry name" value="IspG_bac"/>
</dbReference>
<dbReference type="InterPro" id="IPR004588">
    <property type="entry name" value="IspG_bac-typ"/>
</dbReference>
<dbReference type="InterPro" id="IPR045854">
    <property type="entry name" value="NO2/SO3_Rdtase_4Fe4S_sf"/>
</dbReference>
<dbReference type="NCBIfam" id="TIGR00612">
    <property type="entry name" value="ispG_gcpE"/>
    <property type="match status" value="1"/>
</dbReference>
<dbReference type="NCBIfam" id="NF001540">
    <property type="entry name" value="PRK00366.1"/>
    <property type="match status" value="1"/>
</dbReference>
<dbReference type="PANTHER" id="PTHR30454">
    <property type="entry name" value="4-HYDROXY-3-METHYLBUT-2-EN-1-YL DIPHOSPHATE SYNTHASE"/>
    <property type="match status" value="1"/>
</dbReference>
<dbReference type="PANTHER" id="PTHR30454:SF0">
    <property type="entry name" value="4-HYDROXY-3-METHYLBUT-2-EN-1-YL DIPHOSPHATE SYNTHASE (FERREDOXIN), CHLOROPLASTIC"/>
    <property type="match status" value="1"/>
</dbReference>
<dbReference type="Pfam" id="PF04551">
    <property type="entry name" value="GcpE"/>
    <property type="match status" value="1"/>
</dbReference>
<dbReference type="PIRSF" id="PIRSF004640">
    <property type="entry name" value="IspG"/>
    <property type="match status" value="1"/>
</dbReference>
<dbReference type="SUPFAM" id="SSF51717">
    <property type="entry name" value="Dihydropteroate synthetase-like"/>
    <property type="match status" value="1"/>
</dbReference>
<dbReference type="SUPFAM" id="SSF56014">
    <property type="entry name" value="Nitrite and sulphite reductase 4Fe-4S domain-like"/>
    <property type="match status" value="1"/>
</dbReference>
<protein>
    <recommendedName>
        <fullName evidence="1">4-hydroxy-3-methylbut-2-en-1-yl diphosphate synthase (flavodoxin)</fullName>
        <ecNumber evidence="1">1.17.7.3</ecNumber>
    </recommendedName>
    <alternativeName>
        <fullName evidence="1">1-hydroxy-2-methyl-2-(E)-butenyl 4-diphosphate synthase</fullName>
    </alternativeName>
</protein>
<sequence>MLGLPGEMQYVPGIHSPNEGPRPMTIQRKQTREVRIGKVRIGGANPVVVQSMTNTDTRDVEQTVEQIRQLQEAGCEIVRLAVLNEDAAWAIKPIRSQVSVPLVADIHFDHRLAVSALEAGVDALRINPGNIGTRAAVDRVVDAAKAHNAVIRIGVNSGSLETDLIDQYGGPTPEAMVESAFRHIRMLEDRNFGDIKVSLKSSSVSRCIEAYTLLSAKCDYPLHIGVTEAGTVLRGSIKSAVGLGVLLWQGIGDTLRVSLTSDPVAEMAVAWEILRSLGLRSRGPEIIACPTCGRCEIGLIALAEEVERRLEGETESFKVAVMGCVVNGPGEAREADLGIAGGRDKGIIFRKGEIVRTVKGGSNLLAAFMEELDTFLAHRRAERKDD</sequence>
<feature type="chain" id="PRO_0000190571" description="4-hydroxy-3-methylbut-2-en-1-yl diphosphate synthase (flavodoxin)">
    <location>
        <begin position="1"/>
        <end position="386"/>
    </location>
</feature>
<feature type="binding site" evidence="1">
    <location>
        <position position="289"/>
    </location>
    <ligand>
        <name>[4Fe-4S] cluster</name>
        <dbReference type="ChEBI" id="CHEBI:49883"/>
    </ligand>
</feature>
<feature type="binding site" evidence="1">
    <location>
        <position position="292"/>
    </location>
    <ligand>
        <name>[4Fe-4S] cluster</name>
        <dbReference type="ChEBI" id="CHEBI:49883"/>
    </ligand>
</feature>
<feature type="binding site" evidence="1">
    <location>
        <position position="324"/>
    </location>
    <ligand>
        <name>[4Fe-4S] cluster</name>
        <dbReference type="ChEBI" id="CHEBI:49883"/>
    </ligand>
</feature>
<feature type="binding site" evidence="1">
    <location>
        <position position="331"/>
    </location>
    <ligand>
        <name>[4Fe-4S] cluster</name>
        <dbReference type="ChEBI" id="CHEBI:49883"/>
    </ligand>
</feature>